<dbReference type="EMBL" id="BA000004">
    <property type="protein sequence ID" value="BAB07075.1"/>
    <property type="molecule type" value="Genomic_DNA"/>
</dbReference>
<dbReference type="PIR" id="D84069">
    <property type="entry name" value="D84069"/>
</dbReference>
<dbReference type="RefSeq" id="WP_010899497.1">
    <property type="nucleotide sequence ID" value="NC_002570.2"/>
</dbReference>
<dbReference type="SMR" id="Q9K7K5"/>
<dbReference type="STRING" id="272558.gene:10729269"/>
<dbReference type="GeneID" id="87598876"/>
<dbReference type="KEGG" id="bha:BH3356"/>
<dbReference type="eggNOG" id="COG0776">
    <property type="taxonomic scope" value="Bacteria"/>
</dbReference>
<dbReference type="HOGENOM" id="CLU_105066_3_1_9"/>
<dbReference type="OrthoDB" id="9799835at2"/>
<dbReference type="Proteomes" id="UP000001258">
    <property type="component" value="Chromosome"/>
</dbReference>
<dbReference type="GO" id="GO:0005829">
    <property type="term" value="C:cytosol"/>
    <property type="evidence" value="ECO:0007669"/>
    <property type="project" value="TreeGrafter"/>
</dbReference>
<dbReference type="GO" id="GO:0003677">
    <property type="term" value="F:DNA binding"/>
    <property type="evidence" value="ECO:0007669"/>
    <property type="project" value="UniProtKB-KW"/>
</dbReference>
<dbReference type="GO" id="GO:0030527">
    <property type="term" value="F:structural constituent of chromatin"/>
    <property type="evidence" value="ECO:0007669"/>
    <property type="project" value="InterPro"/>
</dbReference>
<dbReference type="GO" id="GO:0030261">
    <property type="term" value="P:chromosome condensation"/>
    <property type="evidence" value="ECO:0007669"/>
    <property type="project" value="UniProtKB-KW"/>
</dbReference>
<dbReference type="CDD" id="cd13831">
    <property type="entry name" value="HU"/>
    <property type="match status" value="1"/>
</dbReference>
<dbReference type="FunFam" id="4.10.520.10:FF:000001">
    <property type="entry name" value="DNA-binding protein HU"/>
    <property type="match status" value="1"/>
</dbReference>
<dbReference type="Gene3D" id="4.10.520.10">
    <property type="entry name" value="IHF-like DNA-binding proteins"/>
    <property type="match status" value="1"/>
</dbReference>
<dbReference type="InterPro" id="IPR000119">
    <property type="entry name" value="Hist_DNA-bd"/>
</dbReference>
<dbReference type="InterPro" id="IPR020816">
    <property type="entry name" value="Histone-like_DNA-bd_CS"/>
</dbReference>
<dbReference type="InterPro" id="IPR010992">
    <property type="entry name" value="IHF-like_DNA-bd_dom_sf"/>
</dbReference>
<dbReference type="PANTHER" id="PTHR33175">
    <property type="entry name" value="DNA-BINDING PROTEIN HU"/>
    <property type="match status" value="1"/>
</dbReference>
<dbReference type="PANTHER" id="PTHR33175:SF3">
    <property type="entry name" value="DNA-BINDING PROTEIN HU-BETA"/>
    <property type="match status" value="1"/>
</dbReference>
<dbReference type="Pfam" id="PF00216">
    <property type="entry name" value="Bac_DNA_binding"/>
    <property type="match status" value="1"/>
</dbReference>
<dbReference type="PRINTS" id="PR01727">
    <property type="entry name" value="DNABINDINGHU"/>
</dbReference>
<dbReference type="SMART" id="SM00411">
    <property type="entry name" value="BHL"/>
    <property type="match status" value="1"/>
</dbReference>
<dbReference type="SUPFAM" id="SSF47729">
    <property type="entry name" value="IHF-like DNA-binding proteins"/>
    <property type="match status" value="1"/>
</dbReference>
<dbReference type="PROSITE" id="PS00045">
    <property type="entry name" value="HISTONE_LIKE"/>
    <property type="match status" value="1"/>
</dbReference>
<sequence length="90" mass="9829">MNKTELIHQVAERTQMSKKDAGEVVNTVFDVIAESLAQGDSVQLIGFGNFEVRERAARKGRNPQTGEEIDIAATKTPAFKAGKQLKDAVK</sequence>
<feature type="chain" id="PRO_0000104911" description="DNA-binding protein HU-1">
    <location>
        <begin position="1"/>
        <end position="90"/>
    </location>
</feature>
<feature type="modified residue" description="Phosphothreonine" evidence="1">
    <location>
        <position position="4"/>
    </location>
</feature>
<comment type="function">
    <text evidence="1">Histone-like DNA-binding protein which is capable of wrapping DNA to stabilize it, and thus to prevent its denaturation under extreme environmental conditions.</text>
</comment>
<comment type="subunit">
    <text evidence="1">Homodimer.</text>
</comment>
<comment type="similarity">
    <text evidence="2">Belongs to the bacterial histone-like protein family.</text>
</comment>
<organism>
    <name type="scientific">Halalkalibacterium halodurans (strain ATCC BAA-125 / DSM 18197 / FERM 7344 / JCM 9153 / C-125)</name>
    <name type="common">Bacillus halodurans</name>
    <dbReference type="NCBI Taxonomy" id="272558"/>
    <lineage>
        <taxon>Bacteria</taxon>
        <taxon>Bacillati</taxon>
        <taxon>Bacillota</taxon>
        <taxon>Bacilli</taxon>
        <taxon>Bacillales</taxon>
        <taxon>Bacillaceae</taxon>
        <taxon>Halalkalibacterium (ex Joshi et al. 2022)</taxon>
    </lineage>
</organism>
<gene>
    <name type="primary">hup2</name>
    <name type="ordered locus">BH3356</name>
</gene>
<proteinExistence type="inferred from homology"/>
<protein>
    <recommendedName>
        <fullName>DNA-binding protein HU-1</fullName>
    </recommendedName>
</protein>
<evidence type="ECO:0000250" key="1"/>
<evidence type="ECO:0000305" key="2"/>
<reference key="1">
    <citation type="journal article" date="2000" name="Nucleic Acids Res.">
        <title>Complete genome sequence of the alkaliphilic bacterium Bacillus halodurans and genomic sequence comparison with Bacillus subtilis.</title>
        <authorList>
            <person name="Takami H."/>
            <person name="Nakasone K."/>
            <person name="Takaki Y."/>
            <person name="Maeno G."/>
            <person name="Sasaki R."/>
            <person name="Masui N."/>
            <person name="Fuji F."/>
            <person name="Hirama C."/>
            <person name="Nakamura Y."/>
            <person name="Ogasawara N."/>
            <person name="Kuhara S."/>
            <person name="Horikoshi K."/>
        </authorList>
    </citation>
    <scope>NUCLEOTIDE SEQUENCE [LARGE SCALE GENOMIC DNA]</scope>
    <source>
        <strain>ATCC BAA-125 / DSM 18197 / FERM 7344 / JCM 9153 / C-125</strain>
    </source>
</reference>
<keyword id="KW-0226">DNA condensation</keyword>
<keyword id="KW-0238">DNA-binding</keyword>
<keyword id="KW-0597">Phosphoprotein</keyword>
<keyword id="KW-1185">Reference proteome</keyword>
<name>DBH2_HALH5</name>
<accession>Q9K7K5</accession>